<dbReference type="EMBL" id="AF046082">
    <property type="protein sequence ID" value="AAC32081.1"/>
    <property type="molecule type" value="Genomic_RNA"/>
</dbReference>
<dbReference type="SMR" id="Q77XR9"/>
<dbReference type="IntAct" id="Q77XR9">
    <property type="interactions" value="1"/>
</dbReference>
<dbReference type="GO" id="GO:0020002">
    <property type="term" value="C:host cell plasma membrane"/>
    <property type="evidence" value="ECO:0007669"/>
    <property type="project" value="UniProtKB-SubCell"/>
</dbReference>
<dbReference type="GO" id="GO:0016020">
    <property type="term" value="C:membrane"/>
    <property type="evidence" value="ECO:0007669"/>
    <property type="project" value="UniProtKB-UniRule"/>
</dbReference>
<dbReference type="GO" id="GO:0055036">
    <property type="term" value="C:virion membrane"/>
    <property type="evidence" value="ECO:0007669"/>
    <property type="project" value="UniProtKB-SubCell"/>
</dbReference>
<dbReference type="GO" id="GO:0005216">
    <property type="term" value="F:monoatomic ion channel activity"/>
    <property type="evidence" value="ECO:0007669"/>
    <property type="project" value="UniProtKB-UniRule"/>
</dbReference>
<dbReference type="GO" id="GO:0015078">
    <property type="term" value="F:proton transmembrane transporter activity"/>
    <property type="evidence" value="ECO:0007669"/>
    <property type="project" value="UniProtKB-UniRule"/>
</dbReference>
<dbReference type="GO" id="GO:0051259">
    <property type="term" value="P:protein complex oligomerization"/>
    <property type="evidence" value="ECO:0007669"/>
    <property type="project" value="UniProtKB-UniRule"/>
</dbReference>
<dbReference type="GO" id="GO:0044694">
    <property type="term" value="P:symbiont genome entry into host cell via pore formation in plasma membrane"/>
    <property type="evidence" value="ECO:0007669"/>
    <property type="project" value="UniProtKB-UniRule"/>
</dbReference>
<dbReference type="GO" id="GO:0140321">
    <property type="term" value="P:symbiont-mediated suppression of host autophagy"/>
    <property type="evidence" value="ECO:0007669"/>
    <property type="project" value="UniProtKB-KW"/>
</dbReference>
<dbReference type="Gene3D" id="6.10.250.1640">
    <property type="match status" value="1"/>
</dbReference>
<dbReference type="HAMAP" id="MF_04069">
    <property type="entry name" value="INFV_M2"/>
    <property type="match status" value="1"/>
</dbReference>
<dbReference type="InterPro" id="IPR002089">
    <property type="entry name" value="Flu_M2"/>
</dbReference>
<dbReference type="Pfam" id="PF00599">
    <property type="entry name" value="Flu_M2"/>
    <property type="match status" value="1"/>
</dbReference>
<organismHost>
    <name type="scientific">Aves</name>
    <dbReference type="NCBI Taxonomy" id="8782"/>
</organismHost>
<organismHost>
    <name type="scientific">Felis catus</name>
    <name type="common">Cat</name>
    <name type="synonym">Felis silvestris catus</name>
    <dbReference type="NCBI Taxonomy" id="9685"/>
</organismHost>
<organismHost>
    <name type="scientific">Homo sapiens</name>
    <name type="common">Human</name>
    <dbReference type="NCBI Taxonomy" id="9606"/>
</organismHost>
<organismHost>
    <name type="scientific">Panthera pardus</name>
    <name type="common">Leopard</name>
    <name type="synonym">Felis pardus</name>
    <dbReference type="NCBI Taxonomy" id="9691"/>
</organismHost>
<organismHost>
    <name type="scientific">Panthera tigris</name>
    <name type="common">Tiger</name>
    <dbReference type="NCBI Taxonomy" id="9694"/>
</organismHost>
<organismHost>
    <name type="scientific">Sus scrofa</name>
    <name type="common">Pig</name>
    <dbReference type="NCBI Taxonomy" id="9823"/>
</organismHost>
<sequence length="97" mass="11177">MSLLTEVETLTRNGWGCRCSDSSDPLVVAASIIGILHLILWILDRLFFKCIYRRFKYGLKRGPSTEGVPESMREEYRQEQQNAVDVDDGHFVNIELE</sequence>
<reference key="1">
    <citation type="journal article" date="1998" name="J. Virol.">
        <title>Comparisons of highly virulent H5N1 influenza A viruses isolated from humans and chickens from Hong Kong.</title>
        <authorList>
            <person name="Suarez D.L."/>
            <person name="Perdue M.L."/>
            <person name="Cox N."/>
            <person name="Rowe T."/>
            <person name="Bender C."/>
            <person name="Huang J."/>
            <person name="Swayne D.E."/>
        </authorList>
    </citation>
    <scope>NUCLEOTIDE SEQUENCE [GENOMIC RNA]</scope>
</reference>
<comment type="function">
    <text evidence="1">Forms a proton-selective ion channel that is necessary for the efficient release of the viral genome during virus entry. After attaching to the cell surface, the virion enters the cell by endocytosis. Acidification of the endosome triggers M2 ion channel activity. The influx of protons into virion interior is believed to disrupt interactions between the viral ribonucleoprotein (RNP), matrix protein 1 (M1), and lipid bilayers, thereby freeing the viral genome from interaction with viral proteins and enabling RNA segments to migrate to the host cell nucleus, where influenza virus RNA transcription and replication occur. Also plays a role in viral proteins secretory pathway. Elevates the intravesicular pH of normally acidic compartments, such as trans-Golgi network, preventing newly formed hemagglutinin from premature switching to the fusion-active conformation.</text>
</comment>
<comment type="activity regulation">
    <text>The M2 protein from most influenza A strains is inhibited by amantadine and rimantadine, resulting in viral uncoating incapacity. Emergence of amantadine-resistant variants is usually rapid.</text>
</comment>
<comment type="subunit">
    <text evidence="1">Homotetramer; composed of two disulfide-linked dimers held together by non-covalent interactions. May interact with matrix protein 1.</text>
</comment>
<comment type="subcellular location">
    <subcellularLocation>
        <location evidence="1">Virion membrane</location>
    </subcellularLocation>
    <subcellularLocation>
        <location evidence="1">Host apical cell membrane</location>
        <topology evidence="1">Single-pass type III membrane protein</topology>
    </subcellularLocation>
    <text evidence="1">Abundantly expressed at the apical plasma membrane in infected polarized epithelial cells, in close proximity to budding and assembled virions. Minor component of virions (only 16-20 molecules/virion).</text>
</comment>
<comment type="alternative products">
    <event type="alternative splicing"/>
    <isoform>
        <id>Q77XR9-1</id>
        <name>M2</name>
        <sequence type="displayed"/>
    </isoform>
    <isoform>
        <id>Q77XR8-1</id>
        <name>M1</name>
        <sequence type="external"/>
    </isoform>
    <text>Only the first 9 residues are shared by the 2 isoforms.</text>
</comment>
<comment type="domain">
    <text evidence="1">Cytoplasmic tail plays an important role in virion assembly and morphogenesis.</text>
</comment>
<comment type="miscellaneous">
    <text evidence="1">When the channel is activated, one or more imidazole moieties of His-37 probably become bi-protonated.</text>
</comment>
<comment type="similarity">
    <text evidence="1">Belongs to the influenza viruses matrix protein M2 family.</text>
</comment>
<feature type="chain" id="PRO_0000326392" description="Matrix protein 2">
    <location>
        <begin position="1"/>
        <end position="97"/>
    </location>
</feature>
<feature type="topological domain" description="Virion surface" evidence="1">
    <location>
        <begin position="1"/>
        <end position="22"/>
    </location>
</feature>
<feature type="transmembrane region" description="Helical; Signal-anchor for type III membrane protein" evidence="1">
    <location>
        <begin position="23"/>
        <end position="43"/>
    </location>
</feature>
<feature type="topological domain" description="Intravirion" evidence="1">
    <location>
        <begin position="44"/>
        <end position="97"/>
    </location>
</feature>
<feature type="region of interest" description="Disordered" evidence="2">
    <location>
        <begin position="60"/>
        <end position="80"/>
    </location>
</feature>
<feature type="site" description="Essential for channel activity, possibly by being protonated during channel activation, and by forming the channel gate and the selective filter" evidence="1">
    <location>
        <position position="37"/>
    </location>
</feature>
<feature type="site" description="Seems to be involved in pH gating" evidence="1">
    <location>
        <position position="41"/>
    </location>
</feature>
<feature type="modified residue" description="Phosphoserine; by host" evidence="1">
    <location>
        <position position="64"/>
    </location>
</feature>
<feature type="lipid moiety-binding region" description="S-palmitoyl cysteine; by host" evidence="1">
    <location>
        <position position="50"/>
    </location>
</feature>
<feature type="disulfide bond" description="Interchain (with C-17)" evidence="1">
    <location>
        <position position="17"/>
    </location>
</feature>
<feature type="disulfide bond" description="Interchain (with C-19)" evidence="1">
    <location>
        <position position="19"/>
    </location>
</feature>
<gene>
    <name evidence="1" type="primary">M</name>
</gene>
<evidence type="ECO:0000255" key="1">
    <source>
        <dbReference type="HAMAP-Rule" id="MF_04069"/>
    </source>
</evidence>
<evidence type="ECO:0000256" key="2">
    <source>
        <dbReference type="SAM" id="MobiDB-lite"/>
    </source>
</evidence>
<accession>Q77XR9</accession>
<name>M2_I97A0</name>
<organism>
    <name type="scientific">Influenza A virus (strain A/Chicken/Hong Kong/220/1997 H5N1 genotype Gs/Gd)</name>
    <dbReference type="NCBI Taxonomy" id="100834"/>
    <lineage>
        <taxon>Viruses</taxon>
        <taxon>Riboviria</taxon>
        <taxon>Orthornavirae</taxon>
        <taxon>Negarnaviricota</taxon>
        <taxon>Polyploviricotina</taxon>
        <taxon>Insthoviricetes</taxon>
        <taxon>Articulavirales</taxon>
        <taxon>Orthomyxoviridae</taxon>
        <taxon>Alphainfluenzavirus</taxon>
        <taxon>Alphainfluenzavirus influenzae</taxon>
        <taxon>Influenza A virus</taxon>
    </lineage>
</organism>
<proteinExistence type="inferred from homology"/>
<keyword id="KW-0025">Alternative splicing</keyword>
<keyword id="KW-1015">Disulfide bond</keyword>
<keyword id="KW-1032">Host cell membrane</keyword>
<keyword id="KW-1043">Host membrane</keyword>
<keyword id="KW-0945">Host-virus interaction</keyword>
<keyword id="KW-0375">Hydrogen ion transport</keyword>
<keyword id="KW-1083">Inhibition of host autophagy by virus</keyword>
<keyword id="KW-0407">Ion channel</keyword>
<keyword id="KW-0406">Ion transport</keyword>
<keyword id="KW-0449">Lipoprotein</keyword>
<keyword id="KW-0472">Membrane</keyword>
<keyword id="KW-0564">Palmitate</keyword>
<keyword id="KW-0597">Phosphoprotein</keyword>
<keyword id="KW-0735">Signal-anchor</keyword>
<keyword id="KW-0812">Transmembrane</keyword>
<keyword id="KW-1133">Transmembrane helix</keyword>
<keyword id="KW-0813">Transport</keyword>
<keyword id="KW-1182">Viral ion channel</keyword>
<keyword id="KW-0946">Virion</keyword>
<protein>
    <recommendedName>
        <fullName evidence="1">Matrix protein 2</fullName>
    </recommendedName>
    <alternativeName>
        <fullName evidence="1">Proton channel protein M2</fullName>
    </alternativeName>
</protein>